<reference key="1">
    <citation type="journal article" date="2005" name="Physiol. Genomics">
        <title>Cross-species analysis of the mammalian beta-defensin gene family: presence of syntenic gene clusters and preferential expression in the male reproductive tract.</title>
        <authorList>
            <person name="Patil A.A."/>
            <person name="Cai Y."/>
            <person name="Sang Y."/>
            <person name="Blecha F."/>
            <person name="Zhang G."/>
        </authorList>
    </citation>
    <scope>NUCLEOTIDE SEQUENCE [MRNA]</scope>
</reference>
<comment type="function">
    <text evidence="1">Has antibacterial activity.</text>
</comment>
<comment type="subcellular location">
    <subcellularLocation>
        <location evidence="1">Secreted</location>
    </subcellularLocation>
</comment>
<comment type="similarity">
    <text evidence="3">Belongs to the beta-defensin family.</text>
</comment>
<comment type="sequence caution" evidence="3">
    <conflict type="erroneous initiation">
        <sequence resource="EMBL-CDS" id="AAT51887"/>
    </conflict>
</comment>
<evidence type="ECO:0000250" key="1"/>
<evidence type="ECO:0000255" key="2"/>
<evidence type="ECO:0000305" key="3"/>
<feature type="signal peptide" evidence="2">
    <location>
        <begin position="1"/>
        <end position="19"/>
    </location>
</feature>
<feature type="chain" id="PRO_0000352702" description="Beta-defensin 17">
    <location>
        <begin position="20"/>
        <end position="65"/>
    </location>
</feature>
<feature type="disulfide bond" evidence="1">
    <location>
        <begin position="35"/>
        <end position="63"/>
    </location>
</feature>
<feature type="disulfide bond" evidence="1">
    <location>
        <begin position="42"/>
        <end position="56"/>
    </location>
</feature>
<feature type="disulfide bond" evidence="1">
    <location>
        <begin position="46"/>
        <end position="64"/>
    </location>
</feature>
<proteinExistence type="inferred from homology"/>
<accession>Q32ZH5</accession>
<organism>
    <name type="scientific">Rattus norvegicus</name>
    <name type="common">Rat</name>
    <dbReference type="NCBI Taxonomy" id="10116"/>
    <lineage>
        <taxon>Eukaryota</taxon>
        <taxon>Metazoa</taxon>
        <taxon>Chordata</taxon>
        <taxon>Craniata</taxon>
        <taxon>Vertebrata</taxon>
        <taxon>Euteleostomi</taxon>
        <taxon>Mammalia</taxon>
        <taxon>Eutheria</taxon>
        <taxon>Euarchontoglires</taxon>
        <taxon>Glires</taxon>
        <taxon>Rodentia</taxon>
        <taxon>Myomorpha</taxon>
        <taxon>Muroidea</taxon>
        <taxon>Muridae</taxon>
        <taxon>Murinae</taxon>
        <taxon>Rattus</taxon>
    </lineage>
</organism>
<keyword id="KW-0044">Antibiotic</keyword>
<keyword id="KW-0929">Antimicrobial</keyword>
<keyword id="KW-0211">Defensin</keyword>
<keyword id="KW-1015">Disulfide bond</keyword>
<keyword id="KW-1185">Reference proteome</keyword>
<keyword id="KW-0964">Secreted</keyword>
<keyword id="KW-0732">Signal</keyword>
<sequence length="65" mass="7598">MKFHLLFFILLFSITILTGKRSYPEYGSLDLRKECRMSKGHCKLQCSENEIRIAFCIRPGTHCCI</sequence>
<protein>
    <recommendedName>
        <fullName>Beta-defensin 17</fullName>
        <shortName>BD-17</shortName>
    </recommendedName>
    <alternativeName>
        <fullName>Defensin, beta 17</fullName>
    </alternativeName>
</protein>
<name>DFB17_RAT</name>
<dbReference type="EMBL" id="AY621348">
    <property type="protein sequence ID" value="AAT51887.1"/>
    <property type="status" value="ALT_INIT"/>
    <property type="molecule type" value="mRNA"/>
</dbReference>
<dbReference type="RefSeq" id="NP_001032623.2">
    <property type="nucleotide sequence ID" value="NM_001037534.2"/>
</dbReference>
<dbReference type="SMR" id="Q32ZH5"/>
<dbReference type="FunCoup" id="Q32ZH5">
    <property type="interactions" value="1"/>
</dbReference>
<dbReference type="STRING" id="10116.ENSRNOP00000057521"/>
<dbReference type="PaxDb" id="10116-ENSRNOP00000057521"/>
<dbReference type="GeneID" id="641658"/>
<dbReference type="KEGG" id="rno:641658"/>
<dbReference type="UCSC" id="RGD:1565718">
    <property type="organism name" value="rat"/>
</dbReference>
<dbReference type="AGR" id="RGD:1565718"/>
<dbReference type="CTD" id="641658"/>
<dbReference type="RGD" id="1565718">
    <property type="gene designation" value="Defb17"/>
</dbReference>
<dbReference type="eggNOG" id="ENOG502TGN0">
    <property type="taxonomic scope" value="Eukaryota"/>
</dbReference>
<dbReference type="InParanoid" id="Q32ZH5"/>
<dbReference type="OrthoDB" id="9827999at2759"/>
<dbReference type="PhylomeDB" id="Q32ZH5"/>
<dbReference type="Reactome" id="R-RNO-1461957">
    <property type="pathway name" value="Beta defensins"/>
</dbReference>
<dbReference type="Reactome" id="R-RNO-1461973">
    <property type="pathway name" value="Defensins"/>
</dbReference>
<dbReference type="PRO" id="PR:Q32ZH5"/>
<dbReference type="Proteomes" id="UP000002494">
    <property type="component" value="Unplaced"/>
</dbReference>
<dbReference type="GO" id="GO:0005615">
    <property type="term" value="C:extracellular space"/>
    <property type="evidence" value="ECO:0000318"/>
    <property type="project" value="GO_Central"/>
</dbReference>
<dbReference type="GO" id="GO:0031731">
    <property type="term" value="F:CCR6 chemokine receptor binding"/>
    <property type="evidence" value="ECO:0000318"/>
    <property type="project" value="GO_Central"/>
</dbReference>
<dbReference type="GO" id="GO:0042056">
    <property type="term" value="F:chemoattractant activity"/>
    <property type="evidence" value="ECO:0000318"/>
    <property type="project" value="GO_Central"/>
</dbReference>
<dbReference type="GO" id="GO:0060326">
    <property type="term" value="P:cell chemotaxis"/>
    <property type="evidence" value="ECO:0000318"/>
    <property type="project" value="GO_Central"/>
</dbReference>
<dbReference type="GO" id="GO:0042742">
    <property type="term" value="P:defense response to bacterium"/>
    <property type="evidence" value="ECO:0000318"/>
    <property type="project" value="GO_Central"/>
</dbReference>
<dbReference type="GO" id="GO:0045087">
    <property type="term" value="P:innate immune response"/>
    <property type="evidence" value="ECO:0007669"/>
    <property type="project" value="InterPro"/>
</dbReference>
<dbReference type="InterPro" id="IPR025933">
    <property type="entry name" value="Beta_defensin_dom"/>
</dbReference>
<dbReference type="PANTHER" id="PTHR20515">
    <property type="entry name" value="BETA-DEFENSIN"/>
    <property type="match status" value="1"/>
</dbReference>
<dbReference type="PANTHER" id="PTHR20515:SF19">
    <property type="entry name" value="BETA-DEFENSIN 110"/>
    <property type="match status" value="1"/>
</dbReference>
<dbReference type="Pfam" id="PF13841">
    <property type="entry name" value="Defensin_beta_2"/>
    <property type="match status" value="1"/>
</dbReference>
<gene>
    <name type="primary">Defb17</name>
</gene>